<proteinExistence type="inferred from homology"/>
<protein>
    <recommendedName>
        <fullName evidence="1">UDP-2,3-diacylglucosamine hydrolase</fullName>
        <ecNumber evidence="1">3.6.1.54</ecNumber>
    </recommendedName>
    <alternativeName>
        <fullName evidence="1">UDP-2,3-diacylglucosamine diphosphatase</fullName>
    </alternativeName>
</protein>
<feature type="chain" id="PRO_1000082340" description="UDP-2,3-diacylglucosamine hydrolase">
    <location>
        <begin position="1"/>
        <end position="240"/>
    </location>
</feature>
<feature type="binding site" evidence="1">
    <location>
        <position position="8"/>
    </location>
    <ligand>
        <name>Mn(2+)</name>
        <dbReference type="ChEBI" id="CHEBI:29035"/>
        <label>1</label>
    </ligand>
</feature>
<feature type="binding site" evidence="1">
    <location>
        <position position="10"/>
    </location>
    <ligand>
        <name>Mn(2+)</name>
        <dbReference type="ChEBI" id="CHEBI:29035"/>
        <label>1</label>
    </ligand>
</feature>
<feature type="binding site" evidence="1">
    <location>
        <position position="41"/>
    </location>
    <ligand>
        <name>Mn(2+)</name>
        <dbReference type="ChEBI" id="CHEBI:29035"/>
        <label>1</label>
    </ligand>
</feature>
<feature type="binding site" evidence="1">
    <location>
        <position position="41"/>
    </location>
    <ligand>
        <name>Mn(2+)</name>
        <dbReference type="ChEBI" id="CHEBI:29035"/>
        <label>2</label>
    </ligand>
</feature>
<feature type="binding site" evidence="1">
    <location>
        <begin position="79"/>
        <end position="80"/>
    </location>
    <ligand>
        <name>substrate</name>
    </ligand>
</feature>
<feature type="binding site" evidence="1">
    <location>
        <position position="79"/>
    </location>
    <ligand>
        <name>Mn(2+)</name>
        <dbReference type="ChEBI" id="CHEBI:29035"/>
        <label>2</label>
    </ligand>
</feature>
<feature type="binding site" evidence="1">
    <location>
        <position position="114"/>
    </location>
    <ligand>
        <name>Mn(2+)</name>
        <dbReference type="ChEBI" id="CHEBI:29035"/>
        <label>2</label>
    </ligand>
</feature>
<feature type="binding site" evidence="1">
    <location>
        <position position="122"/>
    </location>
    <ligand>
        <name>substrate</name>
    </ligand>
</feature>
<feature type="binding site" evidence="1">
    <location>
        <position position="160"/>
    </location>
    <ligand>
        <name>substrate</name>
    </ligand>
</feature>
<feature type="binding site" evidence="1">
    <location>
        <position position="164"/>
    </location>
    <ligand>
        <name>substrate</name>
    </ligand>
</feature>
<feature type="binding site" evidence="1">
    <location>
        <position position="167"/>
    </location>
    <ligand>
        <name>substrate</name>
    </ligand>
</feature>
<feature type="binding site" evidence="1">
    <location>
        <position position="195"/>
    </location>
    <ligand>
        <name>Mn(2+)</name>
        <dbReference type="ChEBI" id="CHEBI:29035"/>
        <label>2</label>
    </ligand>
</feature>
<feature type="binding site" evidence="1">
    <location>
        <position position="195"/>
    </location>
    <ligand>
        <name>substrate</name>
    </ligand>
</feature>
<feature type="binding site" evidence="1">
    <location>
        <position position="197"/>
    </location>
    <ligand>
        <name>Mn(2+)</name>
        <dbReference type="ChEBI" id="CHEBI:29035"/>
        <label>1</label>
    </ligand>
</feature>
<name>LPXH_SALPB</name>
<sequence length="240" mass="26966">MATLFIADLHLQTEEPAIVAGFLRFLAVEARQADALYILGDLFEAWIGDDDPNPLHREMAVAIKSLVDSGVPCFFIHGNRDFLIGKRFARESGMTLLPQEKVLDLYGRNVLIMHGDTLCTDDAGYQAFRAKVHNPWVQRLFLTLPLFIRRRIAARMRAGSKAANSSKSLDIMDVNAQTVVAEMEKHRVQWLIHGHTHRPAVHELSANDQPAFRVVLGAWHHEGSMVKVTPDNVELIAFPL</sequence>
<dbReference type="EC" id="3.6.1.54" evidence="1"/>
<dbReference type="EMBL" id="CP000886">
    <property type="protein sequence ID" value="ABX68392.1"/>
    <property type="molecule type" value="Genomic_DNA"/>
</dbReference>
<dbReference type="RefSeq" id="WP_000212289.1">
    <property type="nucleotide sequence ID" value="NC_010102.1"/>
</dbReference>
<dbReference type="SMR" id="A9MW33"/>
<dbReference type="KEGG" id="spq:SPAB_03029"/>
<dbReference type="PATRIC" id="fig|1016998.12.peg.2857"/>
<dbReference type="HOGENOM" id="CLU_074586_0_0_6"/>
<dbReference type="BioCyc" id="SENT1016998:SPAB_RS12350-MONOMER"/>
<dbReference type="UniPathway" id="UPA00359">
    <property type="reaction ID" value="UER00480"/>
</dbReference>
<dbReference type="Proteomes" id="UP000008556">
    <property type="component" value="Chromosome"/>
</dbReference>
<dbReference type="GO" id="GO:0005737">
    <property type="term" value="C:cytoplasm"/>
    <property type="evidence" value="ECO:0007669"/>
    <property type="project" value="InterPro"/>
</dbReference>
<dbReference type="GO" id="GO:0019897">
    <property type="term" value="C:extrinsic component of plasma membrane"/>
    <property type="evidence" value="ECO:0007669"/>
    <property type="project" value="UniProtKB-UniRule"/>
</dbReference>
<dbReference type="GO" id="GO:0030145">
    <property type="term" value="F:manganese ion binding"/>
    <property type="evidence" value="ECO:0007669"/>
    <property type="project" value="UniProtKB-UniRule"/>
</dbReference>
<dbReference type="GO" id="GO:0008758">
    <property type="term" value="F:UDP-2,3-diacylglucosamine hydrolase activity"/>
    <property type="evidence" value="ECO:0007669"/>
    <property type="project" value="UniProtKB-UniRule"/>
</dbReference>
<dbReference type="GO" id="GO:0009245">
    <property type="term" value="P:lipid A biosynthetic process"/>
    <property type="evidence" value="ECO:0007669"/>
    <property type="project" value="UniProtKB-UniRule"/>
</dbReference>
<dbReference type="CDD" id="cd07398">
    <property type="entry name" value="MPP_YbbF-LpxH"/>
    <property type="match status" value="1"/>
</dbReference>
<dbReference type="FunFam" id="3.60.21.10:FF:000012">
    <property type="entry name" value="UDP-2,3-diacylglucosamine hydrolase"/>
    <property type="match status" value="1"/>
</dbReference>
<dbReference type="Gene3D" id="3.60.21.10">
    <property type="match status" value="1"/>
</dbReference>
<dbReference type="HAMAP" id="MF_00575">
    <property type="entry name" value="LpxH"/>
    <property type="match status" value="1"/>
</dbReference>
<dbReference type="InterPro" id="IPR004843">
    <property type="entry name" value="Calcineurin-like_PHP_ApaH"/>
</dbReference>
<dbReference type="InterPro" id="IPR043461">
    <property type="entry name" value="LpxH-like"/>
</dbReference>
<dbReference type="InterPro" id="IPR029052">
    <property type="entry name" value="Metallo-depent_PP-like"/>
</dbReference>
<dbReference type="InterPro" id="IPR010138">
    <property type="entry name" value="UDP-diacylglucosamine_Hdrlase"/>
</dbReference>
<dbReference type="NCBIfam" id="TIGR01854">
    <property type="entry name" value="lipid_A_lpxH"/>
    <property type="match status" value="1"/>
</dbReference>
<dbReference type="NCBIfam" id="NF003743">
    <property type="entry name" value="PRK05340.1"/>
    <property type="match status" value="1"/>
</dbReference>
<dbReference type="PANTHER" id="PTHR34990:SF1">
    <property type="entry name" value="UDP-2,3-DIACYLGLUCOSAMINE HYDROLASE"/>
    <property type="match status" value="1"/>
</dbReference>
<dbReference type="PANTHER" id="PTHR34990">
    <property type="entry name" value="UDP-2,3-DIACYLGLUCOSAMINE HYDROLASE-RELATED"/>
    <property type="match status" value="1"/>
</dbReference>
<dbReference type="Pfam" id="PF00149">
    <property type="entry name" value="Metallophos"/>
    <property type="match status" value="1"/>
</dbReference>
<dbReference type="SUPFAM" id="SSF56300">
    <property type="entry name" value="Metallo-dependent phosphatases"/>
    <property type="match status" value="1"/>
</dbReference>
<organism>
    <name type="scientific">Salmonella paratyphi B (strain ATCC BAA-1250 / SPB7)</name>
    <dbReference type="NCBI Taxonomy" id="1016998"/>
    <lineage>
        <taxon>Bacteria</taxon>
        <taxon>Pseudomonadati</taxon>
        <taxon>Pseudomonadota</taxon>
        <taxon>Gammaproteobacteria</taxon>
        <taxon>Enterobacterales</taxon>
        <taxon>Enterobacteriaceae</taxon>
        <taxon>Salmonella</taxon>
    </lineage>
</organism>
<comment type="function">
    <text evidence="1">Hydrolyzes the pyrophosphate bond of UDP-2,3-diacylglucosamine to yield 2,3-diacylglucosamine 1-phosphate (lipid X) and UMP by catalyzing the attack of water at the alpha-P atom. Involved in the biosynthesis of lipid A, a phosphorylated glycolipid that anchors the lipopolysaccharide to the outer membrane of the cell.</text>
</comment>
<comment type="catalytic activity">
    <reaction evidence="1">
        <text>UDP-2-N,3-O-bis[(3R)-3-hydroxytetradecanoyl]-alpha-D-glucosamine + H2O = 2-N,3-O-bis[(3R)-3-hydroxytetradecanoyl]-alpha-D-glucosaminyl 1-phosphate + UMP + 2 H(+)</text>
        <dbReference type="Rhea" id="RHEA:25213"/>
        <dbReference type="ChEBI" id="CHEBI:15377"/>
        <dbReference type="ChEBI" id="CHEBI:15378"/>
        <dbReference type="ChEBI" id="CHEBI:57865"/>
        <dbReference type="ChEBI" id="CHEBI:57957"/>
        <dbReference type="ChEBI" id="CHEBI:78847"/>
        <dbReference type="EC" id="3.6.1.54"/>
    </reaction>
</comment>
<comment type="cofactor">
    <cofactor evidence="1">
        <name>Mn(2+)</name>
        <dbReference type="ChEBI" id="CHEBI:29035"/>
    </cofactor>
    <text evidence="1">Binds 2 Mn(2+) ions per subunit in a binuclear metal center.</text>
</comment>
<comment type="pathway">
    <text evidence="1">Glycolipid biosynthesis; lipid IV(A) biosynthesis; lipid IV(A) from (3R)-3-hydroxytetradecanoyl-[acyl-carrier-protein] and UDP-N-acetyl-alpha-D-glucosamine: step 4/6.</text>
</comment>
<comment type="subcellular location">
    <subcellularLocation>
        <location evidence="1">Cell inner membrane</location>
        <topology evidence="1">Peripheral membrane protein</topology>
        <orientation evidence="1">Cytoplasmic side</orientation>
    </subcellularLocation>
</comment>
<comment type="similarity">
    <text evidence="1">Belongs to the LpxH family.</text>
</comment>
<keyword id="KW-0997">Cell inner membrane</keyword>
<keyword id="KW-1003">Cell membrane</keyword>
<keyword id="KW-0378">Hydrolase</keyword>
<keyword id="KW-0441">Lipid A biosynthesis</keyword>
<keyword id="KW-0444">Lipid biosynthesis</keyword>
<keyword id="KW-0443">Lipid metabolism</keyword>
<keyword id="KW-0464">Manganese</keyword>
<keyword id="KW-0472">Membrane</keyword>
<keyword id="KW-0479">Metal-binding</keyword>
<evidence type="ECO:0000255" key="1">
    <source>
        <dbReference type="HAMAP-Rule" id="MF_00575"/>
    </source>
</evidence>
<gene>
    <name evidence="1" type="primary">lpxH</name>
    <name type="ordered locus">SPAB_03029</name>
</gene>
<accession>A9MW33</accession>
<reference key="1">
    <citation type="submission" date="2007-11" db="EMBL/GenBank/DDBJ databases">
        <authorList>
            <consortium name="The Salmonella enterica serovar Paratyphi B Genome Sequencing Project"/>
            <person name="McClelland M."/>
            <person name="Sanderson E.K."/>
            <person name="Porwollik S."/>
            <person name="Spieth J."/>
            <person name="Clifton W.S."/>
            <person name="Fulton R."/>
            <person name="Cordes M."/>
            <person name="Wollam A."/>
            <person name="Shah N."/>
            <person name="Pepin K."/>
            <person name="Bhonagiri V."/>
            <person name="Nash W."/>
            <person name="Johnson M."/>
            <person name="Thiruvilangam P."/>
            <person name="Wilson R."/>
        </authorList>
    </citation>
    <scope>NUCLEOTIDE SEQUENCE [LARGE SCALE GENOMIC DNA]</scope>
    <source>
        <strain>ATCC BAA-1250 / SPB7</strain>
    </source>
</reference>